<sequence>MAVTKLVLVRHGESQWNNENRFTGWYDVDLSEKGRTEAKAAGKLLKDEGFTFDFAYTSVLKRAIHTLWSILDELDQAWLPTEKTWKLNERHYGALQGLDKSETAAKYGDEQVKLWRRGFAITPPALDKSDERFPGHDPRYAKLTDAELPTTESLALTIDRVIPYWEEVIKPRIASGERVIIAAHGNSLRALVKYLDNLNEEEILELNIPTGVPLVYEFDENFKPIKHYYLGNADEIAAKAAAVANQGKAK</sequence>
<name>GPMA_YERE8</name>
<evidence type="ECO:0000255" key="1">
    <source>
        <dbReference type="HAMAP-Rule" id="MF_01039"/>
    </source>
</evidence>
<accession>A1JRT1</accession>
<organism>
    <name type="scientific">Yersinia enterocolitica serotype O:8 / biotype 1B (strain NCTC 13174 / 8081)</name>
    <dbReference type="NCBI Taxonomy" id="393305"/>
    <lineage>
        <taxon>Bacteria</taxon>
        <taxon>Pseudomonadati</taxon>
        <taxon>Pseudomonadota</taxon>
        <taxon>Gammaproteobacteria</taxon>
        <taxon>Enterobacterales</taxon>
        <taxon>Yersiniaceae</taxon>
        <taxon>Yersinia</taxon>
    </lineage>
</organism>
<keyword id="KW-0312">Gluconeogenesis</keyword>
<keyword id="KW-0324">Glycolysis</keyword>
<keyword id="KW-0413">Isomerase</keyword>
<reference key="1">
    <citation type="journal article" date="2006" name="PLoS Genet.">
        <title>The complete genome sequence and comparative genome analysis of the high pathogenicity Yersinia enterocolitica strain 8081.</title>
        <authorList>
            <person name="Thomson N.R."/>
            <person name="Howard S."/>
            <person name="Wren B.W."/>
            <person name="Holden M.T.G."/>
            <person name="Crossman L."/>
            <person name="Challis G.L."/>
            <person name="Churcher C."/>
            <person name="Mungall K."/>
            <person name="Brooks K."/>
            <person name="Chillingworth T."/>
            <person name="Feltwell T."/>
            <person name="Abdellah Z."/>
            <person name="Hauser H."/>
            <person name="Jagels K."/>
            <person name="Maddison M."/>
            <person name="Moule S."/>
            <person name="Sanders M."/>
            <person name="Whitehead S."/>
            <person name="Quail M.A."/>
            <person name="Dougan G."/>
            <person name="Parkhill J."/>
            <person name="Prentice M.B."/>
        </authorList>
    </citation>
    <scope>NUCLEOTIDE SEQUENCE [LARGE SCALE GENOMIC DNA]</scope>
    <source>
        <strain>NCTC 13174 / 8081</strain>
    </source>
</reference>
<feature type="chain" id="PRO_1000064114" description="2,3-bisphosphoglycerate-dependent phosphoglycerate mutase">
    <location>
        <begin position="1"/>
        <end position="250"/>
    </location>
</feature>
<feature type="active site" description="Tele-phosphohistidine intermediate" evidence="1">
    <location>
        <position position="11"/>
    </location>
</feature>
<feature type="active site" description="Proton donor/acceptor" evidence="1">
    <location>
        <position position="89"/>
    </location>
</feature>
<feature type="binding site" evidence="1">
    <location>
        <begin position="10"/>
        <end position="17"/>
    </location>
    <ligand>
        <name>substrate</name>
    </ligand>
</feature>
<feature type="binding site" evidence="1">
    <location>
        <begin position="23"/>
        <end position="24"/>
    </location>
    <ligand>
        <name>substrate</name>
    </ligand>
</feature>
<feature type="binding site" evidence="1">
    <location>
        <position position="62"/>
    </location>
    <ligand>
        <name>substrate</name>
    </ligand>
</feature>
<feature type="binding site" evidence="1">
    <location>
        <begin position="89"/>
        <end position="92"/>
    </location>
    <ligand>
        <name>substrate</name>
    </ligand>
</feature>
<feature type="binding site" evidence="1">
    <location>
        <position position="100"/>
    </location>
    <ligand>
        <name>substrate</name>
    </ligand>
</feature>
<feature type="binding site" evidence="1">
    <location>
        <begin position="116"/>
        <end position="117"/>
    </location>
    <ligand>
        <name>substrate</name>
    </ligand>
</feature>
<feature type="binding site" evidence="1">
    <location>
        <begin position="185"/>
        <end position="186"/>
    </location>
    <ligand>
        <name>substrate</name>
    </ligand>
</feature>
<feature type="site" description="Transition state stabilizer" evidence="1">
    <location>
        <position position="184"/>
    </location>
</feature>
<protein>
    <recommendedName>
        <fullName evidence="1">2,3-bisphosphoglycerate-dependent phosphoglycerate mutase</fullName>
        <shortName evidence="1">BPG-dependent PGAM</shortName>
        <shortName evidence="1">PGAM</shortName>
        <shortName evidence="1">Phosphoglyceromutase</shortName>
        <shortName evidence="1">dPGM</shortName>
        <ecNumber evidence="1">5.4.2.11</ecNumber>
    </recommendedName>
</protein>
<dbReference type="EC" id="5.4.2.11" evidence="1"/>
<dbReference type="EMBL" id="AM286415">
    <property type="protein sequence ID" value="CAL12963.1"/>
    <property type="molecule type" value="Genomic_DNA"/>
</dbReference>
<dbReference type="RefSeq" id="WP_005159006.1">
    <property type="nucleotide sequence ID" value="NC_008800.1"/>
</dbReference>
<dbReference type="RefSeq" id="YP_001007113.1">
    <property type="nucleotide sequence ID" value="NC_008800.1"/>
</dbReference>
<dbReference type="SMR" id="A1JRT1"/>
<dbReference type="GeneID" id="93970550"/>
<dbReference type="KEGG" id="yen:YE2924"/>
<dbReference type="PATRIC" id="fig|393305.7.peg.3111"/>
<dbReference type="eggNOG" id="COG0588">
    <property type="taxonomic scope" value="Bacteria"/>
</dbReference>
<dbReference type="HOGENOM" id="CLU_033323_1_1_6"/>
<dbReference type="OrthoDB" id="9781415at2"/>
<dbReference type="UniPathway" id="UPA00109">
    <property type="reaction ID" value="UER00186"/>
</dbReference>
<dbReference type="Proteomes" id="UP000000642">
    <property type="component" value="Chromosome"/>
</dbReference>
<dbReference type="GO" id="GO:0004619">
    <property type="term" value="F:phosphoglycerate mutase activity"/>
    <property type="evidence" value="ECO:0007669"/>
    <property type="project" value="UniProtKB-EC"/>
</dbReference>
<dbReference type="GO" id="GO:0006094">
    <property type="term" value="P:gluconeogenesis"/>
    <property type="evidence" value="ECO:0007669"/>
    <property type="project" value="UniProtKB-UniRule"/>
</dbReference>
<dbReference type="GO" id="GO:0006096">
    <property type="term" value="P:glycolytic process"/>
    <property type="evidence" value="ECO:0007669"/>
    <property type="project" value="UniProtKB-UniRule"/>
</dbReference>
<dbReference type="CDD" id="cd07067">
    <property type="entry name" value="HP_PGM_like"/>
    <property type="match status" value="1"/>
</dbReference>
<dbReference type="FunFam" id="3.40.50.1240:FF:000003">
    <property type="entry name" value="2,3-bisphosphoglycerate-dependent phosphoglycerate mutase"/>
    <property type="match status" value="1"/>
</dbReference>
<dbReference type="Gene3D" id="3.40.50.1240">
    <property type="entry name" value="Phosphoglycerate mutase-like"/>
    <property type="match status" value="1"/>
</dbReference>
<dbReference type="HAMAP" id="MF_01039">
    <property type="entry name" value="PGAM_GpmA"/>
    <property type="match status" value="1"/>
</dbReference>
<dbReference type="InterPro" id="IPR013078">
    <property type="entry name" value="His_Pase_superF_clade-1"/>
</dbReference>
<dbReference type="InterPro" id="IPR029033">
    <property type="entry name" value="His_PPase_superfam"/>
</dbReference>
<dbReference type="InterPro" id="IPR001345">
    <property type="entry name" value="PG/BPGM_mutase_AS"/>
</dbReference>
<dbReference type="InterPro" id="IPR005952">
    <property type="entry name" value="Phosphogly_mut1"/>
</dbReference>
<dbReference type="NCBIfam" id="TIGR01258">
    <property type="entry name" value="pgm_1"/>
    <property type="match status" value="1"/>
</dbReference>
<dbReference type="NCBIfam" id="NF010713">
    <property type="entry name" value="PRK14115.1"/>
    <property type="match status" value="1"/>
</dbReference>
<dbReference type="PANTHER" id="PTHR11931">
    <property type="entry name" value="PHOSPHOGLYCERATE MUTASE"/>
    <property type="match status" value="1"/>
</dbReference>
<dbReference type="Pfam" id="PF00300">
    <property type="entry name" value="His_Phos_1"/>
    <property type="match status" value="2"/>
</dbReference>
<dbReference type="PIRSF" id="PIRSF000709">
    <property type="entry name" value="6PFK_2-Ptase"/>
    <property type="match status" value="1"/>
</dbReference>
<dbReference type="SMART" id="SM00855">
    <property type="entry name" value="PGAM"/>
    <property type="match status" value="1"/>
</dbReference>
<dbReference type="SUPFAM" id="SSF53254">
    <property type="entry name" value="Phosphoglycerate mutase-like"/>
    <property type="match status" value="1"/>
</dbReference>
<dbReference type="PROSITE" id="PS00175">
    <property type="entry name" value="PG_MUTASE"/>
    <property type="match status" value="1"/>
</dbReference>
<comment type="function">
    <text evidence="1">Catalyzes the interconversion of 2-phosphoglycerate and 3-phosphoglycerate.</text>
</comment>
<comment type="catalytic activity">
    <reaction evidence="1">
        <text>(2R)-2-phosphoglycerate = (2R)-3-phosphoglycerate</text>
        <dbReference type="Rhea" id="RHEA:15901"/>
        <dbReference type="ChEBI" id="CHEBI:58272"/>
        <dbReference type="ChEBI" id="CHEBI:58289"/>
        <dbReference type="EC" id="5.4.2.11"/>
    </reaction>
</comment>
<comment type="pathway">
    <text evidence="1">Carbohydrate degradation; glycolysis; pyruvate from D-glyceraldehyde 3-phosphate: step 3/5.</text>
</comment>
<comment type="subunit">
    <text evidence="1">Homodimer.</text>
</comment>
<comment type="similarity">
    <text evidence="1">Belongs to the phosphoglycerate mutase family. BPG-dependent PGAM subfamily.</text>
</comment>
<gene>
    <name evidence="1" type="primary">gpmA</name>
    <name type="ordered locus">YE2924</name>
</gene>
<proteinExistence type="inferred from homology"/>